<keyword id="KW-0027">Amidation</keyword>
<keyword id="KW-0903">Direct protein sequencing</keyword>
<keyword id="KW-1015">Disulfide bond</keyword>
<keyword id="KW-0960">Knottin</keyword>
<keyword id="KW-0964">Secreted</keyword>
<keyword id="KW-0800">Toxin</keyword>
<reference key="1">
    <citation type="journal article" date="2012" name="FEBS J.">
        <title>Multicomponent venom of the spider Cupiennius salei: a bioanalytical investigation applying different strategies.</title>
        <authorList>
            <person name="Trachsel C."/>
            <person name="Siegemund D."/>
            <person name="Kampfer U."/>
            <person name="Kopp L.S."/>
            <person name="Buhr C."/>
            <person name="Grossmann J."/>
            <person name="Luthi C."/>
            <person name="Cunningham M."/>
            <person name="Nentwig W."/>
            <person name="Kuhn-Nentwig L."/>
            <person name="Schurch S."/>
            <person name="Schaller J."/>
        </authorList>
    </citation>
    <scope>PROTEIN SEQUENCE</scope>
    <scope>MASS SPECTROMETRY</scope>
    <scope>AMIDATION AT TRP-40</scope>
    <scope>DISULFIDE BONDS</scope>
    <source>
        <tissue>Venom</tissue>
    </source>
</reference>
<organism>
    <name type="scientific">Cupiennius salei</name>
    <name type="common">American wandering spider</name>
    <dbReference type="NCBI Taxonomy" id="6928"/>
    <lineage>
        <taxon>Eukaryota</taxon>
        <taxon>Metazoa</taxon>
        <taxon>Ecdysozoa</taxon>
        <taxon>Arthropoda</taxon>
        <taxon>Chelicerata</taxon>
        <taxon>Arachnida</taxon>
        <taxon>Araneae</taxon>
        <taxon>Araneomorphae</taxon>
        <taxon>Entelegynae</taxon>
        <taxon>Lycosoidea</taxon>
        <taxon>Ctenidae</taxon>
        <taxon>Cupiennius</taxon>
    </lineage>
</organism>
<proteinExistence type="evidence at protein level"/>
<evidence type="ECO:0000250" key="1">
    <source>
        <dbReference type="UniProtKB" id="P58604"/>
    </source>
</evidence>
<evidence type="ECO:0000255" key="2"/>
<evidence type="ECO:0000269" key="3">
    <source>
    </source>
</evidence>
<evidence type="ECO:0000303" key="4">
    <source>
    </source>
</evidence>
<evidence type="ECO:0000305" key="5">
    <source>
    </source>
</evidence>
<dbReference type="SMR" id="B3EWT2"/>
<dbReference type="GO" id="GO:0005576">
    <property type="term" value="C:extracellular region"/>
    <property type="evidence" value="ECO:0007669"/>
    <property type="project" value="UniProtKB-SubCell"/>
</dbReference>
<dbReference type="GO" id="GO:0008200">
    <property type="term" value="F:ion channel inhibitor activity"/>
    <property type="evidence" value="ECO:0007669"/>
    <property type="project" value="InterPro"/>
</dbReference>
<dbReference type="GO" id="GO:0090729">
    <property type="term" value="F:toxin activity"/>
    <property type="evidence" value="ECO:0007669"/>
    <property type="project" value="UniProtKB-KW"/>
</dbReference>
<dbReference type="CDD" id="cd12960">
    <property type="entry name" value="Spider_toxin"/>
    <property type="match status" value="1"/>
</dbReference>
<dbReference type="Gene3D" id="4.10.40.10">
    <property type="match status" value="1"/>
</dbReference>
<dbReference type="InterPro" id="IPR004169">
    <property type="entry name" value="Spidertoxin"/>
</dbReference>
<dbReference type="Pfam" id="PF02819">
    <property type="entry name" value="Toxin_9"/>
    <property type="match status" value="1"/>
</dbReference>
<dbReference type="SUPFAM" id="SSF57059">
    <property type="entry name" value="omega toxin-like"/>
    <property type="match status" value="1"/>
</dbReference>
<accession>B3EWT2</accession>
<comment type="subcellular location">
    <subcellularLocation>
        <location evidence="3">Secreted</location>
    </subcellularLocation>
</comment>
<comment type="tissue specificity">
    <text evidence="5">Expressed by the venom gland.</text>
</comment>
<comment type="domain">
    <text evidence="1">The presence of a 'disulfide through disulfide knot' structurally defines this protein as a knottin.</text>
</comment>
<comment type="PTM">
    <text evidence="3">Contains 4 disulfide bonds.</text>
</comment>
<comment type="mass spectrometry" mass="4397.973" method="Electrospray" evidence="3"/>
<comment type="similarity">
    <text evidence="2">Belongs to the neurotoxin 02 (plectoxin) family.</text>
</comment>
<protein>
    <recommendedName>
        <fullName evidence="4">Toxin CSTX-17</fullName>
    </recommendedName>
</protein>
<name>TX20A_CUPSA</name>
<sequence length="40" mass="4410">GCIPKHKRCTWSGPKCCNNISCHCNISGTLCKCRPGLFGW</sequence>
<feature type="peptide" id="PRO_0000421189" description="Toxin CSTX-17" evidence="3">
    <location>
        <begin position="1"/>
        <end position="40"/>
    </location>
</feature>
<feature type="modified residue" description="Tryptophan amide" evidence="3">
    <location>
        <position position="40"/>
    </location>
</feature>
<feature type="disulfide bond" evidence="1">
    <location>
        <begin position="2"/>
        <end position="17"/>
    </location>
</feature>
<feature type="disulfide bond" evidence="1">
    <location>
        <begin position="9"/>
        <end position="22"/>
    </location>
</feature>
<feature type="disulfide bond" evidence="1">
    <location>
        <begin position="16"/>
        <end position="33"/>
    </location>
</feature>
<feature type="disulfide bond" evidence="1">
    <location>
        <begin position="24"/>
        <end position="31"/>
    </location>
</feature>